<dbReference type="EC" id="3.4.24.-"/>
<dbReference type="EMBL" id="AK046333">
    <property type="protein sequence ID" value="BAC32684.1"/>
    <property type="molecule type" value="mRNA"/>
</dbReference>
<dbReference type="EMBL" id="AF528163">
    <property type="protein sequence ID" value="AAO17380.1"/>
    <property type="status" value="ALT_SEQ"/>
    <property type="molecule type" value="Genomic_DNA"/>
</dbReference>
<dbReference type="EMBL" id="BC100558">
    <property type="protein sequence ID" value="AAI00559.1"/>
    <property type="status" value="ALT_SEQ"/>
    <property type="molecule type" value="mRNA"/>
</dbReference>
<dbReference type="EMBL" id="AF302012">
    <property type="protein sequence ID" value="AAK97226.1"/>
    <property type="molecule type" value="mRNA"/>
</dbReference>
<dbReference type="CCDS" id="CCDS37566.1">
    <molecule id="P58459-1"/>
</dbReference>
<dbReference type="RefSeq" id="NP_766207.2">
    <molecule id="P58459-1"/>
    <property type="nucleotide sequence ID" value="NM_172619.4"/>
</dbReference>
<dbReference type="SMR" id="P58459"/>
<dbReference type="FunCoup" id="P58459">
    <property type="interactions" value="73"/>
</dbReference>
<dbReference type="STRING" id="10090.ENSMUSP00000084905"/>
<dbReference type="MEROPS" id="M12.235"/>
<dbReference type="GlyCosmos" id="P58459">
    <property type="glycosylation" value="5 sites, No reported glycans"/>
</dbReference>
<dbReference type="GlyGen" id="P58459">
    <property type="glycosylation" value="5 sites, 1 N-linked glycan (1 site)"/>
</dbReference>
<dbReference type="iPTMnet" id="P58459"/>
<dbReference type="PhosphoSitePlus" id="P58459"/>
<dbReference type="PaxDb" id="10090-ENSMUSP00000084905"/>
<dbReference type="Antibodypedia" id="51079">
    <property type="antibodies" value="151 antibodies from 29 providers"/>
</dbReference>
<dbReference type="DNASU" id="224697"/>
<dbReference type="Ensembl" id="ENSMUST00000087623.13">
    <molecule id="P58459-1"/>
    <property type="protein sequence ID" value="ENSMUSP00000084905.7"/>
    <property type="gene ID" value="ENSMUSG00000024299.18"/>
</dbReference>
<dbReference type="Ensembl" id="ENSMUST00000234715.2">
    <molecule id="P58459-2"/>
    <property type="protein sequence ID" value="ENSMUSP00000157264.2"/>
    <property type="gene ID" value="ENSMUSG00000024299.18"/>
</dbReference>
<dbReference type="GeneID" id="224697"/>
<dbReference type="KEGG" id="mmu:224697"/>
<dbReference type="UCSC" id="uc008bym.2">
    <molecule id="P58459-2"/>
    <property type="organism name" value="mouse"/>
</dbReference>
<dbReference type="UCSC" id="uc008byn.2">
    <molecule id="P58459-3"/>
    <property type="organism name" value="mouse"/>
</dbReference>
<dbReference type="UCSC" id="uc008byp.2">
    <molecule id="P58459-1"/>
    <property type="organism name" value="mouse"/>
</dbReference>
<dbReference type="AGR" id="MGI:2449112"/>
<dbReference type="CTD" id="81794"/>
<dbReference type="MGI" id="MGI:2449112">
    <property type="gene designation" value="Adamts10"/>
</dbReference>
<dbReference type="VEuPathDB" id="HostDB:ENSMUSG00000024299"/>
<dbReference type="eggNOG" id="KOG3538">
    <property type="taxonomic scope" value="Eukaryota"/>
</dbReference>
<dbReference type="GeneTree" id="ENSGT00940000158404"/>
<dbReference type="HOGENOM" id="CLU_000660_1_1_1"/>
<dbReference type="InParanoid" id="P58459"/>
<dbReference type="OMA" id="AVHCTSH"/>
<dbReference type="OrthoDB" id="10035764at2759"/>
<dbReference type="PhylomeDB" id="P58459"/>
<dbReference type="TreeFam" id="TF313537"/>
<dbReference type="Reactome" id="R-MMU-5173214">
    <property type="pathway name" value="O-glycosylation of TSR domain-containing proteins"/>
</dbReference>
<dbReference type="BioGRID-ORCS" id="224697">
    <property type="hits" value="3 hits in 77 CRISPR screens"/>
</dbReference>
<dbReference type="ChiTaRS" id="Adamts10">
    <property type="organism name" value="mouse"/>
</dbReference>
<dbReference type="PRO" id="PR:P58459"/>
<dbReference type="Proteomes" id="UP000000589">
    <property type="component" value="Chromosome 17"/>
</dbReference>
<dbReference type="RNAct" id="P58459">
    <property type="molecule type" value="protein"/>
</dbReference>
<dbReference type="Bgee" id="ENSMUSG00000024299">
    <property type="expression patterns" value="Expressed in humerus cartilage element and 198 other cell types or tissues"/>
</dbReference>
<dbReference type="ExpressionAtlas" id="P58459">
    <property type="expression patterns" value="baseline and differential"/>
</dbReference>
<dbReference type="GO" id="GO:0062023">
    <property type="term" value="C:collagen-containing extracellular matrix"/>
    <property type="evidence" value="ECO:0000250"/>
    <property type="project" value="UniProtKB"/>
</dbReference>
<dbReference type="GO" id="GO:0005576">
    <property type="term" value="C:extracellular region"/>
    <property type="evidence" value="ECO:0007669"/>
    <property type="project" value="UniProtKB-KW"/>
</dbReference>
<dbReference type="GO" id="GO:0001527">
    <property type="term" value="C:microfibril"/>
    <property type="evidence" value="ECO:0000250"/>
    <property type="project" value="UniProtKB"/>
</dbReference>
<dbReference type="GO" id="GO:0046872">
    <property type="term" value="F:metal ion binding"/>
    <property type="evidence" value="ECO:0007669"/>
    <property type="project" value="UniProtKB-KW"/>
</dbReference>
<dbReference type="GO" id="GO:0004222">
    <property type="term" value="F:metalloendopeptidase activity"/>
    <property type="evidence" value="ECO:0007669"/>
    <property type="project" value="InterPro"/>
</dbReference>
<dbReference type="GO" id="GO:0030198">
    <property type="term" value="P:extracellular matrix organization"/>
    <property type="evidence" value="ECO:0007669"/>
    <property type="project" value="InterPro"/>
</dbReference>
<dbReference type="GO" id="GO:0006508">
    <property type="term" value="P:proteolysis"/>
    <property type="evidence" value="ECO:0007669"/>
    <property type="project" value="UniProtKB-KW"/>
</dbReference>
<dbReference type="CDD" id="cd04273">
    <property type="entry name" value="ZnMc_ADAMTS_like"/>
    <property type="match status" value="1"/>
</dbReference>
<dbReference type="FunFam" id="2.20.100.10:FF:000006">
    <property type="entry name" value="A disintegrin and metalloproteinase with thrombospondin motifs 1"/>
    <property type="match status" value="1"/>
</dbReference>
<dbReference type="FunFam" id="2.60.120.830:FF:000001">
    <property type="entry name" value="A disintegrin and metalloproteinase with thrombospondin motifs 1"/>
    <property type="match status" value="1"/>
</dbReference>
<dbReference type="FunFam" id="3.40.390.10:FF:000001">
    <property type="entry name" value="A disintegrin and metalloproteinase with thrombospondin motifs 1"/>
    <property type="match status" value="1"/>
</dbReference>
<dbReference type="FunFam" id="3.40.1620.60:FF:000002">
    <property type="entry name" value="A disintegrin and metalloproteinase with thrombospondin motifs 10"/>
    <property type="match status" value="1"/>
</dbReference>
<dbReference type="FunFam" id="2.20.100.10:FF:000064">
    <property type="entry name" value="A disintegrin and metalloproteinase with thrombospondin motifs 10 preproprotein"/>
    <property type="match status" value="1"/>
</dbReference>
<dbReference type="FunFam" id="2.20.100.10:FF:000079">
    <property type="entry name" value="ADAM metallopeptidase with thrombospondin type 1 motif 17"/>
    <property type="match status" value="1"/>
</dbReference>
<dbReference type="FunFam" id="2.20.100.10:FF:000005">
    <property type="entry name" value="ADAM metallopeptidase with thrombospondin type 1 motif 9"/>
    <property type="match status" value="2"/>
</dbReference>
<dbReference type="Gene3D" id="2.60.120.830">
    <property type="match status" value="1"/>
</dbReference>
<dbReference type="Gene3D" id="3.40.1620.60">
    <property type="match status" value="1"/>
</dbReference>
<dbReference type="Gene3D" id="3.40.390.10">
    <property type="entry name" value="Collagenase (Catalytic Domain)"/>
    <property type="match status" value="1"/>
</dbReference>
<dbReference type="Gene3D" id="2.20.100.10">
    <property type="entry name" value="Thrombospondin type-1 (TSP1) repeat"/>
    <property type="match status" value="5"/>
</dbReference>
<dbReference type="InterPro" id="IPR013273">
    <property type="entry name" value="ADAMTS/ADAMTS-like"/>
</dbReference>
<dbReference type="InterPro" id="IPR050439">
    <property type="entry name" value="ADAMTS_ADAMTS-like"/>
</dbReference>
<dbReference type="InterPro" id="IPR041645">
    <property type="entry name" value="ADAMTS_CR_2"/>
</dbReference>
<dbReference type="InterPro" id="IPR045371">
    <property type="entry name" value="ADAMTS_CR_3"/>
</dbReference>
<dbReference type="InterPro" id="IPR010294">
    <property type="entry name" value="ADAMTS_spacer1"/>
</dbReference>
<dbReference type="InterPro" id="IPR024079">
    <property type="entry name" value="MetalloPept_cat_dom_sf"/>
</dbReference>
<dbReference type="InterPro" id="IPR001590">
    <property type="entry name" value="Peptidase_M12B"/>
</dbReference>
<dbReference type="InterPro" id="IPR002870">
    <property type="entry name" value="Peptidase_M12B_N"/>
</dbReference>
<dbReference type="InterPro" id="IPR010909">
    <property type="entry name" value="PLAC"/>
</dbReference>
<dbReference type="InterPro" id="IPR000884">
    <property type="entry name" value="TSP1_rpt"/>
</dbReference>
<dbReference type="InterPro" id="IPR036383">
    <property type="entry name" value="TSP1_rpt_sf"/>
</dbReference>
<dbReference type="PANTHER" id="PTHR13723:SF26">
    <property type="entry name" value="A DISINTEGRIN AND METALLOPROTEINASE WITH THROMBOSPONDIN MOTIFS 10"/>
    <property type="match status" value="1"/>
</dbReference>
<dbReference type="PANTHER" id="PTHR13723">
    <property type="entry name" value="ADAMTS A DISINTEGRIN AND METALLOPROTEASE WITH THROMBOSPONDIN MOTIFS PROTEASE"/>
    <property type="match status" value="1"/>
</dbReference>
<dbReference type="Pfam" id="PF17771">
    <property type="entry name" value="ADAMTS_CR_2"/>
    <property type="match status" value="1"/>
</dbReference>
<dbReference type="Pfam" id="PF19236">
    <property type="entry name" value="ADAMTS_CR_3"/>
    <property type="match status" value="1"/>
</dbReference>
<dbReference type="Pfam" id="PF05986">
    <property type="entry name" value="ADAMTS_spacer1"/>
    <property type="match status" value="1"/>
</dbReference>
<dbReference type="Pfam" id="PF01562">
    <property type="entry name" value="Pep_M12B_propep"/>
    <property type="match status" value="1"/>
</dbReference>
<dbReference type="Pfam" id="PF08686">
    <property type="entry name" value="PLAC"/>
    <property type="match status" value="1"/>
</dbReference>
<dbReference type="Pfam" id="PF01421">
    <property type="entry name" value="Reprolysin"/>
    <property type="match status" value="1"/>
</dbReference>
<dbReference type="Pfam" id="PF19030">
    <property type="entry name" value="TSP1_ADAMTS"/>
    <property type="match status" value="4"/>
</dbReference>
<dbReference type="Pfam" id="PF00090">
    <property type="entry name" value="TSP_1"/>
    <property type="match status" value="1"/>
</dbReference>
<dbReference type="PRINTS" id="PR01857">
    <property type="entry name" value="ADAMTSFAMILY"/>
</dbReference>
<dbReference type="SMART" id="SM00209">
    <property type="entry name" value="TSP1"/>
    <property type="match status" value="5"/>
</dbReference>
<dbReference type="SUPFAM" id="SSF55486">
    <property type="entry name" value="Metalloproteases ('zincins'), catalytic domain"/>
    <property type="match status" value="1"/>
</dbReference>
<dbReference type="SUPFAM" id="SSF82895">
    <property type="entry name" value="TSP-1 type 1 repeat"/>
    <property type="match status" value="5"/>
</dbReference>
<dbReference type="PROSITE" id="PS50215">
    <property type="entry name" value="ADAM_MEPRO"/>
    <property type="match status" value="1"/>
</dbReference>
<dbReference type="PROSITE" id="PS50900">
    <property type="entry name" value="PLAC"/>
    <property type="match status" value="1"/>
</dbReference>
<dbReference type="PROSITE" id="PS50092">
    <property type="entry name" value="TSP1"/>
    <property type="match status" value="5"/>
</dbReference>
<dbReference type="PROSITE" id="PS00142">
    <property type="entry name" value="ZINC_PROTEASE"/>
    <property type="match status" value="1"/>
</dbReference>
<protein>
    <recommendedName>
        <fullName>A disintegrin and metalloproteinase with thrombospondin motifs 10</fullName>
        <shortName>ADAM-TS 10</shortName>
        <shortName>ADAM-TS10</shortName>
        <shortName>ADAMTS-10</shortName>
        <ecNumber>3.4.24.-</ecNumber>
    </recommendedName>
</protein>
<organism>
    <name type="scientific">Mus musculus</name>
    <name type="common">Mouse</name>
    <dbReference type="NCBI Taxonomy" id="10090"/>
    <lineage>
        <taxon>Eukaryota</taxon>
        <taxon>Metazoa</taxon>
        <taxon>Chordata</taxon>
        <taxon>Craniata</taxon>
        <taxon>Vertebrata</taxon>
        <taxon>Euteleostomi</taxon>
        <taxon>Mammalia</taxon>
        <taxon>Eutheria</taxon>
        <taxon>Euarchontoglires</taxon>
        <taxon>Glires</taxon>
        <taxon>Rodentia</taxon>
        <taxon>Myomorpha</taxon>
        <taxon>Muroidea</taxon>
        <taxon>Muridae</taxon>
        <taxon>Murinae</taxon>
        <taxon>Mus</taxon>
        <taxon>Mus</taxon>
    </lineage>
</organism>
<evidence type="ECO:0000250" key="1"/>
<evidence type="ECO:0000255" key="2"/>
<evidence type="ECO:0000255" key="3">
    <source>
        <dbReference type="PROSITE-ProRule" id="PRU00210"/>
    </source>
</evidence>
<evidence type="ECO:0000255" key="4">
    <source>
        <dbReference type="PROSITE-ProRule" id="PRU00233"/>
    </source>
</evidence>
<evidence type="ECO:0000255" key="5">
    <source>
        <dbReference type="PROSITE-ProRule" id="PRU00276"/>
    </source>
</evidence>
<evidence type="ECO:0000255" key="6">
    <source>
        <dbReference type="PROSITE-ProRule" id="PRU10095"/>
    </source>
</evidence>
<evidence type="ECO:0000269" key="7">
    <source>
    </source>
</evidence>
<evidence type="ECO:0000303" key="8">
    <source>
    </source>
</evidence>
<evidence type="ECO:0000303" key="9">
    <source>
    </source>
</evidence>
<evidence type="ECO:0000305" key="10"/>
<comment type="function">
    <text evidence="1">Metalloprotease that participate in microfibrils assembly. Microfibrils are extracellular matrix components occurring independently or along with elastin in the formation of elastic tissues (By similarity).</text>
</comment>
<comment type="cofactor">
    <cofactor evidence="1">
        <name>Zn(2+)</name>
        <dbReference type="ChEBI" id="CHEBI:29105"/>
    </cofactor>
    <text evidence="1">Binds 1 zinc ion per subunit.</text>
</comment>
<comment type="subunit">
    <text evidence="1">Interacts with FBN1; this interaction promotes microfibrils assembly.</text>
</comment>
<comment type="subcellular location">
    <subcellularLocation>
        <location evidence="1">Secreted</location>
        <location evidence="1">Extracellular space</location>
        <location evidence="1">Extracellular matrix</location>
    </subcellularLocation>
</comment>
<comment type="alternative products">
    <event type="alternative splicing"/>
    <isoform>
        <id>P58459-1</id>
        <name>1</name>
        <sequence type="displayed"/>
    </isoform>
    <isoform>
        <id>P58459-2</id>
        <name>2</name>
        <sequence type="described" ref="VSP_026109 VSP_026110"/>
    </isoform>
    <isoform>
        <id>P58459-3</id>
        <name>3</name>
        <sequence type="described" ref="VSP_026108 VSP_026111 VSP_026112"/>
    </isoform>
</comment>
<comment type="tissue specificity">
    <text evidence="7">Widely expressed in adult tissues.</text>
</comment>
<comment type="developmental stage">
    <text evidence="7">Widely expressed throughout embryo development. Widespread expression in embryo until 12.5 days of gestation, after which it is then expressed in a more restricted fashion, with especially strong expression in developing lung, bone, and craniofacial region.</text>
</comment>
<comment type="domain">
    <text evidence="1">The spacer domain and the TSP type-1 domains are important for a tight interaction with the extracellular matrix.</text>
</comment>
<comment type="PTM">
    <text evidence="1">Glycosylated. Can be O-fucosylated by POFUT2 on a serine or a threonine residue found within the consensus sequence C1-X(2)-(S/T)-C2-G of the TSP type-1 repeat domains where C1 and C2 are the first and second cysteine residue of the repeat, respectively. Fucosylated repeats can then be further glycosylated by the addition of a beta-1,3-glucose residue by the glucosyltransferase, B3GALTL. Fucosylation mediates the efficient secretion of ADAMTS family members. Can also be C-glycosylated with one or two mannose molecules on tryptophan residues within the consensus sequence W-X-X-W of the TPRs, and N-glycosylated. These other glycosylations can also facilitate secretion (By similarity).</text>
</comment>
<comment type="miscellaneous">
    <molecule>Isoform 2</molecule>
    <text evidence="10">May be due to intron retention.</text>
</comment>
<comment type="sequence caution" evidence="10">
    <conflict type="erroneous initiation">
        <sequence resource="EMBL-CDS" id="AAI00559"/>
    </conflict>
    <text>Truncated N-terminus.</text>
</comment>
<comment type="sequence caution" evidence="10">
    <conflict type="frameshift">
        <sequence resource="EMBL-CDS" id="AAI00559"/>
    </conflict>
</comment>
<comment type="sequence caution" evidence="10">
    <conflict type="erroneous gene model prediction">
        <sequence resource="EMBL-CDS" id="AAO17380"/>
    </conflict>
</comment>
<gene>
    <name type="primary">Adamts10</name>
</gene>
<proteinExistence type="evidence at transcript level"/>
<reference key="1">
    <citation type="journal article" date="2005" name="Science">
        <title>The transcriptional landscape of the mammalian genome.</title>
        <authorList>
            <person name="Carninci P."/>
            <person name="Kasukawa T."/>
            <person name="Katayama S."/>
            <person name="Gough J."/>
            <person name="Frith M.C."/>
            <person name="Maeda N."/>
            <person name="Oyama R."/>
            <person name="Ravasi T."/>
            <person name="Lenhard B."/>
            <person name="Wells C."/>
            <person name="Kodzius R."/>
            <person name="Shimokawa K."/>
            <person name="Bajic V.B."/>
            <person name="Brenner S.E."/>
            <person name="Batalov S."/>
            <person name="Forrest A.R."/>
            <person name="Zavolan M."/>
            <person name="Davis M.J."/>
            <person name="Wilming L.G."/>
            <person name="Aidinis V."/>
            <person name="Allen J.E."/>
            <person name="Ambesi-Impiombato A."/>
            <person name="Apweiler R."/>
            <person name="Aturaliya R.N."/>
            <person name="Bailey T.L."/>
            <person name="Bansal M."/>
            <person name="Baxter L."/>
            <person name="Beisel K.W."/>
            <person name="Bersano T."/>
            <person name="Bono H."/>
            <person name="Chalk A.M."/>
            <person name="Chiu K.P."/>
            <person name="Choudhary V."/>
            <person name="Christoffels A."/>
            <person name="Clutterbuck D.R."/>
            <person name="Crowe M.L."/>
            <person name="Dalla E."/>
            <person name="Dalrymple B.P."/>
            <person name="de Bono B."/>
            <person name="Della Gatta G."/>
            <person name="di Bernardo D."/>
            <person name="Down T."/>
            <person name="Engstrom P."/>
            <person name="Fagiolini M."/>
            <person name="Faulkner G."/>
            <person name="Fletcher C.F."/>
            <person name="Fukushima T."/>
            <person name="Furuno M."/>
            <person name="Futaki S."/>
            <person name="Gariboldi M."/>
            <person name="Georgii-Hemming P."/>
            <person name="Gingeras T.R."/>
            <person name="Gojobori T."/>
            <person name="Green R.E."/>
            <person name="Gustincich S."/>
            <person name="Harbers M."/>
            <person name="Hayashi Y."/>
            <person name="Hensch T.K."/>
            <person name="Hirokawa N."/>
            <person name="Hill D."/>
            <person name="Huminiecki L."/>
            <person name="Iacono M."/>
            <person name="Ikeo K."/>
            <person name="Iwama A."/>
            <person name="Ishikawa T."/>
            <person name="Jakt M."/>
            <person name="Kanapin A."/>
            <person name="Katoh M."/>
            <person name="Kawasawa Y."/>
            <person name="Kelso J."/>
            <person name="Kitamura H."/>
            <person name="Kitano H."/>
            <person name="Kollias G."/>
            <person name="Krishnan S.P."/>
            <person name="Kruger A."/>
            <person name="Kummerfeld S.K."/>
            <person name="Kurochkin I.V."/>
            <person name="Lareau L.F."/>
            <person name="Lazarevic D."/>
            <person name="Lipovich L."/>
            <person name="Liu J."/>
            <person name="Liuni S."/>
            <person name="McWilliam S."/>
            <person name="Madan Babu M."/>
            <person name="Madera M."/>
            <person name="Marchionni L."/>
            <person name="Matsuda H."/>
            <person name="Matsuzawa S."/>
            <person name="Miki H."/>
            <person name="Mignone F."/>
            <person name="Miyake S."/>
            <person name="Morris K."/>
            <person name="Mottagui-Tabar S."/>
            <person name="Mulder N."/>
            <person name="Nakano N."/>
            <person name="Nakauchi H."/>
            <person name="Ng P."/>
            <person name="Nilsson R."/>
            <person name="Nishiguchi S."/>
            <person name="Nishikawa S."/>
            <person name="Nori F."/>
            <person name="Ohara O."/>
            <person name="Okazaki Y."/>
            <person name="Orlando V."/>
            <person name="Pang K.C."/>
            <person name="Pavan W.J."/>
            <person name="Pavesi G."/>
            <person name="Pesole G."/>
            <person name="Petrovsky N."/>
            <person name="Piazza S."/>
            <person name="Reed J."/>
            <person name="Reid J.F."/>
            <person name="Ring B.Z."/>
            <person name="Ringwald M."/>
            <person name="Rost B."/>
            <person name="Ruan Y."/>
            <person name="Salzberg S.L."/>
            <person name="Sandelin A."/>
            <person name="Schneider C."/>
            <person name="Schoenbach C."/>
            <person name="Sekiguchi K."/>
            <person name="Semple C.A."/>
            <person name="Seno S."/>
            <person name="Sessa L."/>
            <person name="Sheng Y."/>
            <person name="Shibata Y."/>
            <person name="Shimada H."/>
            <person name="Shimada K."/>
            <person name="Silva D."/>
            <person name="Sinclair B."/>
            <person name="Sperling S."/>
            <person name="Stupka E."/>
            <person name="Sugiura K."/>
            <person name="Sultana R."/>
            <person name="Takenaka Y."/>
            <person name="Taki K."/>
            <person name="Tammoja K."/>
            <person name="Tan S.L."/>
            <person name="Tang S."/>
            <person name="Taylor M.S."/>
            <person name="Tegner J."/>
            <person name="Teichmann S.A."/>
            <person name="Ueda H.R."/>
            <person name="van Nimwegen E."/>
            <person name="Verardo R."/>
            <person name="Wei C.L."/>
            <person name="Yagi K."/>
            <person name="Yamanishi H."/>
            <person name="Zabarovsky E."/>
            <person name="Zhu S."/>
            <person name="Zimmer A."/>
            <person name="Hide W."/>
            <person name="Bult C."/>
            <person name="Grimmond S.M."/>
            <person name="Teasdale R.D."/>
            <person name="Liu E.T."/>
            <person name="Brusic V."/>
            <person name="Quackenbush J."/>
            <person name="Wahlestedt C."/>
            <person name="Mattick J.S."/>
            <person name="Hume D.A."/>
            <person name="Kai C."/>
            <person name="Sasaki D."/>
            <person name="Tomaru Y."/>
            <person name="Fukuda S."/>
            <person name="Kanamori-Katayama M."/>
            <person name="Suzuki M."/>
            <person name="Aoki J."/>
            <person name="Arakawa T."/>
            <person name="Iida J."/>
            <person name="Imamura K."/>
            <person name="Itoh M."/>
            <person name="Kato T."/>
            <person name="Kawaji H."/>
            <person name="Kawagashira N."/>
            <person name="Kawashima T."/>
            <person name="Kojima M."/>
            <person name="Kondo S."/>
            <person name="Konno H."/>
            <person name="Nakano K."/>
            <person name="Ninomiya N."/>
            <person name="Nishio T."/>
            <person name="Okada M."/>
            <person name="Plessy C."/>
            <person name="Shibata K."/>
            <person name="Shiraki T."/>
            <person name="Suzuki S."/>
            <person name="Tagami M."/>
            <person name="Waki K."/>
            <person name="Watahiki A."/>
            <person name="Okamura-Oho Y."/>
            <person name="Suzuki H."/>
            <person name="Kawai J."/>
            <person name="Hayashizaki Y."/>
        </authorList>
    </citation>
    <scope>NUCLEOTIDE SEQUENCE [LARGE SCALE MRNA] (ISOFORM 2)</scope>
    <source>
        <strain>C57BL/6J</strain>
        <tissue>Corpora quadrigemina</tissue>
    </source>
</reference>
<reference key="2">
    <citation type="journal article" date="2004" name="Mamm. Genome">
        <title>Gene content of the 750-kb critical region for mouse embryonic ectoderm lethal tcl-w5.</title>
        <authorList>
            <person name="Abe K."/>
            <person name="Yuzuriha M."/>
            <person name="Sugimoto M."/>
            <person name="Ko M.S."/>
            <person name="Brathwaite M.E."/>
            <person name="Waeltz P."/>
            <person name="Nagaraja R."/>
        </authorList>
    </citation>
    <scope>NUCLEOTIDE SEQUENCE [LARGE SCALE GENOMIC DNA]</scope>
    <source>
        <strain>129/Sv</strain>
    </source>
</reference>
<reference key="3">
    <citation type="journal article" date="2004" name="Genome Res.">
        <title>The status, quality, and expansion of the NIH full-length cDNA project: the Mammalian Gene Collection (MGC).</title>
        <authorList>
            <consortium name="The MGC Project Team"/>
        </authorList>
    </citation>
    <scope>NUCLEOTIDE SEQUENCE [LARGE SCALE MRNA] (ISOFORM 3)</scope>
    <source>
        <strain>Czech II</strain>
        <tissue>Lung</tissue>
    </source>
</reference>
<reference key="4">
    <citation type="journal article" date="2004" name="J. Biol. Chem.">
        <title>Discovery and characterization of a novel, widely expressed metalloprotease, ADAMTS10, and its proteolytic activation.</title>
        <authorList>
            <person name="Somerville R.P.T."/>
            <person name="Jungers K.A."/>
            <person name="Apte S.S."/>
        </authorList>
    </citation>
    <scope>NUCLEOTIDE SEQUENCE [MRNA] OF 655-1104 (ISOFORM 1)</scope>
    <scope>TISSUE SPECIFICITY</scope>
    <scope>DEVELOPMENTAL STAGE</scope>
</reference>
<feature type="signal peptide" evidence="2">
    <location>
        <begin position="1"/>
        <end position="25"/>
    </location>
</feature>
<feature type="propeptide" id="PRO_0000270149" evidence="1">
    <location>
        <begin position="26"/>
        <end position="233"/>
    </location>
</feature>
<feature type="chain" id="PRO_0000078211" description="A disintegrin and metalloproteinase with thrombospondin motifs 10">
    <location>
        <begin position="234"/>
        <end position="1104"/>
    </location>
</feature>
<feature type="domain" description="Peptidase M12B" evidence="5">
    <location>
        <begin position="239"/>
        <end position="457"/>
    </location>
</feature>
<feature type="domain" description="Disintegrin">
    <location>
        <begin position="460"/>
        <end position="546"/>
    </location>
</feature>
<feature type="domain" description="TSP type-1 1" evidence="3">
    <location>
        <begin position="547"/>
        <end position="602"/>
    </location>
</feature>
<feature type="domain" description="TSP type-1 2" evidence="3">
    <location>
        <begin position="825"/>
        <end position="885"/>
    </location>
</feature>
<feature type="domain" description="TSP type-1 3" evidence="3">
    <location>
        <begin position="888"/>
        <end position="943"/>
    </location>
</feature>
<feature type="domain" description="TSP type-1 4" evidence="3">
    <location>
        <begin position="944"/>
        <end position="1003"/>
    </location>
</feature>
<feature type="domain" description="TSP type-1 5" evidence="3">
    <location>
        <begin position="1004"/>
        <end position="1058"/>
    </location>
</feature>
<feature type="domain" description="PLAC" evidence="4">
    <location>
        <begin position="1066"/>
        <end position="1104"/>
    </location>
</feature>
<feature type="region of interest" description="Spacer" evidence="1">
    <location>
        <begin position="706"/>
        <end position="818"/>
    </location>
</feature>
<feature type="active site" evidence="5 6">
    <location>
        <position position="393"/>
    </location>
</feature>
<feature type="binding site" evidence="1">
    <location>
        <position position="392"/>
    </location>
    <ligand>
        <name>Zn(2+)</name>
        <dbReference type="ChEBI" id="CHEBI:29105"/>
        <note>catalytic</note>
    </ligand>
</feature>
<feature type="binding site" evidence="1">
    <location>
        <position position="396"/>
    </location>
    <ligand>
        <name>Zn(2+)</name>
        <dbReference type="ChEBI" id="CHEBI:29105"/>
        <note>catalytic</note>
    </ligand>
</feature>
<feature type="binding site" evidence="1">
    <location>
        <position position="402"/>
    </location>
    <ligand>
        <name>Zn(2+)</name>
        <dbReference type="ChEBI" id="CHEBI:29105"/>
        <note>catalytic</note>
    </ligand>
</feature>
<feature type="glycosylation site" description="N-linked (GlcNAc...) asparagine" evidence="2">
    <location>
        <position position="90"/>
    </location>
</feature>
<feature type="glycosylation site" description="N-linked (GlcNAc...) asparagine" evidence="2">
    <location>
        <position position="222"/>
    </location>
</feature>
<feature type="glycosylation site" description="N-linked (GlcNAc...) asparagine" evidence="2">
    <location>
        <position position="740"/>
    </location>
</feature>
<feature type="glycosylation site" description="N-linked (GlcNAc...) asparagine" evidence="2">
    <location>
        <position position="795"/>
    </location>
</feature>
<feature type="glycosylation site" description="N-linked (GlcNAc...) asparagine" evidence="2">
    <location>
        <position position="892"/>
    </location>
</feature>
<feature type="disulfide bond" evidence="1">
    <location>
        <begin position="315"/>
        <end position="376"/>
    </location>
</feature>
<feature type="disulfide bond" evidence="1">
    <location>
        <begin position="351"/>
        <end position="358"/>
    </location>
</feature>
<feature type="disulfide bond" evidence="1">
    <location>
        <begin position="370"/>
        <end position="452"/>
    </location>
</feature>
<feature type="disulfide bond" evidence="1">
    <location>
        <begin position="409"/>
        <end position="436"/>
    </location>
</feature>
<feature type="disulfide bond" evidence="1">
    <location>
        <begin position="479"/>
        <end position="501"/>
    </location>
</feature>
<feature type="disulfide bond" evidence="1">
    <location>
        <begin position="490"/>
        <end position="508"/>
    </location>
</feature>
<feature type="disulfide bond" evidence="1">
    <location>
        <begin position="496"/>
        <end position="531"/>
    </location>
</feature>
<feature type="disulfide bond" evidence="1">
    <location>
        <begin position="521"/>
        <end position="536"/>
    </location>
</feature>
<feature type="disulfide bond" evidence="1">
    <location>
        <begin position="559"/>
        <end position="596"/>
    </location>
</feature>
<feature type="disulfide bond" evidence="1">
    <location>
        <begin position="563"/>
        <end position="601"/>
    </location>
</feature>
<feature type="disulfide bond" evidence="1">
    <location>
        <begin position="574"/>
        <end position="586"/>
    </location>
</feature>
<feature type="disulfide bond" evidence="1">
    <location>
        <begin position="837"/>
        <end position="879"/>
    </location>
</feature>
<feature type="disulfide bond" evidence="1">
    <location>
        <begin position="841"/>
        <end position="884"/>
    </location>
</feature>
<feature type="disulfide bond" evidence="1">
    <location>
        <begin position="852"/>
        <end position="866"/>
    </location>
</feature>
<feature type="splice variant" id="VSP_026108" description="In isoform 3." evidence="8">
    <location>
        <begin position="80"/>
        <end position="145"/>
    </location>
</feature>
<feature type="splice variant" id="VSP_026109" description="In isoform 2." evidence="9">
    <original>HG</original>
    <variation>VS</variation>
    <location>
        <begin position="146"/>
        <end position="147"/>
    </location>
</feature>
<feature type="splice variant" id="VSP_026110" description="In isoform 2." evidence="9">
    <location>
        <begin position="148"/>
        <end position="1104"/>
    </location>
</feature>
<feature type="splice variant" id="VSP_026111" description="In isoform 3." evidence="8">
    <original>AKLFQDSS</original>
    <variation>SAFLGLES</variation>
    <location>
        <begin position="272"/>
        <end position="279"/>
    </location>
</feature>
<feature type="splice variant" id="VSP_026112" description="In isoform 3." evidence="8">
    <location>
        <begin position="280"/>
        <end position="1104"/>
    </location>
</feature>
<name>ATS10_MOUSE</name>
<sequence length="1104" mass="121086">MASACQILRWALALGLGLTFKVTHAFRSQDELLSSLESYEIAFPTRVDHNGAMLAFSPPAFRRQRRGAGATTESRLFYKVAAPSTHFLLNLTRSPRLLAGHVSVEYWTREGLAWQRAARAHCLYAGHLQGQAGSSHVAVSTCGGLHGLIVADDEEYLIEPLQGGPKGHRGPEESGPHVVYKRSSLRHPHLDTACGVRDEKPWKGRPWWLRTLKPPPARPLGNESERGQLGLKRSVSRERYVETLVVADKMMVAYHGRRDVEQYVLAIMNIVAKLFQDSSLGNIVNILVTRLILLTEDQPTLEITHHAGKSLDSFCKWQKSIVSHSGHGNAIPENGVANHDTAVLITRYDICIYKNKPCGTLGLAPVGGMCERERSCSINEDIGLATAFTIAHEIGHTFGMNHDGVGNGCGARGQDPAKLMAAHITMKTNPFVWSSCSRDYITSFLDSGLGLCLNNRPPRQDFVYPTVAPGQAYDADEQCRFQHGVKSRQCKYGEVCSELWCLSKSNRCITNSIPAAEGTLCQTHTIDKGWCYKRVCVPFGSRPEGVDGAWGPWTPWGDCSRSCGGGVSSSSRHCDSPRPTIGGKYCLGERRRHRSCNTNDCPPGSQDFREMQCSEFDSVPFRGKFYTWKTYRGGGVKACSLTCLAEGFNFYTERAAAVVDGTPCRPDTVDICVSGECKHVGCDRVLGSDLREDKCRVCGGDGSACETIEGVFSPALPGTGYEDVVWIPKGSVHIFIQDLNLSLSHLALKGDQESLLLEGLPGTPQPHRLPLAGTTFHLRQGPDQAQSLEALGPINASLIIMVLAQAELPALHYRFNAPIARDALPPYSWHYAPWTKCSAQCAGGSQVQVVECRNQLDSSAVAPHYCSGHSKLPKRQRACNTEPCPPDWVVGNWSRCSRSCDAGVRSRSVVCQRRVSAAEEKALDDSACPQPRPPVLEACQGPMCPPEWATLDWSECTPSCGPGLRHRVVLCKSADQRSTLPPGHCLPAAKPPSTMRCNLRRCPPARWVTSEWGECSTQCGLGQQQRTVRCTSHTGQPSRECTEALRPSTMQQCEAKCDSVVPPGDGPEECKDVNKVAYCPLVLKFQFCSRAYFRQMCCKTCQGR</sequence>
<keyword id="KW-0025">Alternative splicing</keyword>
<keyword id="KW-0165">Cleavage on pair of basic residues</keyword>
<keyword id="KW-1015">Disulfide bond</keyword>
<keyword id="KW-0272">Extracellular matrix</keyword>
<keyword id="KW-0325">Glycoprotein</keyword>
<keyword id="KW-0378">Hydrolase</keyword>
<keyword id="KW-0479">Metal-binding</keyword>
<keyword id="KW-0482">Metalloprotease</keyword>
<keyword id="KW-0645">Protease</keyword>
<keyword id="KW-1185">Reference proteome</keyword>
<keyword id="KW-0677">Repeat</keyword>
<keyword id="KW-0964">Secreted</keyword>
<keyword id="KW-0732">Signal</keyword>
<keyword id="KW-0862">Zinc</keyword>
<accession>P58459</accession>
<accession>Q497H1</accession>
<accession>Q78TI1</accession>
<accession>Q8CG28</accession>